<evidence type="ECO:0000255" key="1">
    <source>
        <dbReference type="HAMAP-Rule" id="MF_00204"/>
    </source>
</evidence>
<sequence length="661" mass="75333">MNNFSIISEYKPAGDQPKAIDEIIAGLSSKKRSQMLLGITGSGKTFTMANIIERTNRPTLIMAHNKTLAAQIYSEMKSLFPKNAVEYFVSYYDYYQPEAYIARTDTFIEKDSSINEQIDLMRHAATRSLLERRDVIVVSSVSCIYGLGSPDLYYQMMVNLEPGQSYPRDQLLNDLINLQYERNDIGFERGCFRVKGDNIDIFPSHYSDKAWRLSFFGNELEYIHEFDPLTGEKLAKLDKAMVFGNSHFVMPQETVNNAISGIEEELQKRLEFLKSQDKPLETQRLNQRTQYDLEMLTETGSCKGVENYSRFFTGRNAGEPPPTLFEYLPEDALLFVDESHVSVPQIRAMYNGDRARKKVLVEHGFRLPSALDNRPLKFEEWDKFRPQTVFVSATPGPFELEETGGTVVELIIRPTGLLDPECIIKPATNQVEDLISEIQTTIAQGFRVLVTTLTKKMAEDLTAYLQELKYKTSYLHSNVHTLERIEILRDLRQGTIDVLVGINLLREGLDIPECGLVAILDADKEGFLRSEVSLIQTIGRAARNSAGRVILYADKMTKSIDKAVSETLRRRQIQQEYNEKHGIIPKTINRAIHALAEFEKIDSKLDKKQAHTLFDNPAKLKTHIDKLKKEMLKAASNLEFEQAVKLRDQLKTLEEAALELS</sequence>
<protein>
    <recommendedName>
        <fullName evidence="1">UvrABC system protein B</fullName>
        <shortName evidence="1">Protein UvrB</shortName>
    </recommendedName>
    <alternativeName>
        <fullName evidence="1">Excinuclease ABC subunit B</fullName>
    </alternativeName>
</protein>
<name>UVRB_RICCN</name>
<proteinExistence type="inferred from homology"/>
<dbReference type="EMBL" id="AE006914">
    <property type="protein sequence ID" value="AAL02804.1"/>
    <property type="molecule type" value="Genomic_DNA"/>
</dbReference>
<dbReference type="PIR" id="B97733">
    <property type="entry name" value="B97733"/>
</dbReference>
<dbReference type="RefSeq" id="WP_010976926.1">
    <property type="nucleotide sequence ID" value="NC_003103.1"/>
</dbReference>
<dbReference type="SMR" id="Q92J03"/>
<dbReference type="GeneID" id="927906"/>
<dbReference type="KEGG" id="rco:RC0266"/>
<dbReference type="PATRIC" id="fig|272944.4.peg.303"/>
<dbReference type="HOGENOM" id="CLU_009621_2_1_5"/>
<dbReference type="Proteomes" id="UP000000816">
    <property type="component" value="Chromosome"/>
</dbReference>
<dbReference type="GO" id="GO:0005737">
    <property type="term" value="C:cytoplasm"/>
    <property type="evidence" value="ECO:0007669"/>
    <property type="project" value="UniProtKB-SubCell"/>
</dbReference>
<dbReference type="GO" id="GO:0009380">
    <property type="term" value="C:excinuclease repair complex"/>
    <property type="evidence" value="ECO:0007669"/>
    <property type="project" value="InterPro"/>
</dbReference>
<dbReference type="GO" id="GO:0005524">
    <property type="term" value="F:ATP binding"/>
    <property type="evidence" value="ECO:0007669"/>
    <property type="project" value="UniProtKB-UniRule"/>
</dbReference>
<dbReference type="GO" id="GO:0016887">
    <property type="term" value="F:ATP hydrolysis activity"/>
    <property type="evidence" value="ECO:0007669"/>
    <property type="project" value="InterPro"/>
</dbReference>
<dbReference type="GO" id="GO:0003677">
    <property type="term" value="F:DNA binding"/>
    <property type="evidence" value="ECO:0007669"/>
    <property type="project" value="UniProtKB-UniRule"/>
</dbReference>
<dbReference type="GO" id="GO:0009381">
    <property type="term" value="F:excinuclease ABC activity"/>
    <property type="evidence" value="ECO:0007669"/>
    <property type="project" value="UniProtKB-UniRule"/>
</dbReference>
<dbReference type="GO" id="GO:0006289">
    <property type="term" value="P:nucleotide-excision repair"/>
    <property type="evidence" value="ECO:0007669"/>
    <property type="project" value="UniProtKB-UniRule"/>
</dbReference>
<dbReference type="GO" id="GO:0009432">
    <property type="term" value="P:SOS response"/>
    <property type="evidence" value="ECO:0007669"/>
    <property type="project" value="UniProtKB-UniRule"/>
</dbReference>
<dbReference type="CDD" id="cd17916">
    <property type="entry name" value="DEXHc_UvrB"/>
    <property type="match status" value="1"/>
</dbReference>
<dbReference type="CDD" id="cd18790">
    <property type="entry name" value="SF2_C_UvrB"/>
    <property type="match status" value="1"/>
</dbReference>
<dbReference type="Gene3D" id="3.40.50.300">
    <property type="entry name" value="P-loop containing nucleotide triphosphate hydrolases"/>
    <property type="match status" value="3"/>
</dbReference>
<dbReference type="Gene3D" id="4.10.860.10">
    <property type="entry name" value="UVR domain"/>
    <property type="match status" value="1"/>
</dbReference>
<dbReference type="HAMAP" id="MF_00204">
    <property type="entry name" value="UvrB"/>
    <property type="match status" value="1"/>
</dbReference>
<dbReference type="InterPro" id="IPR006935">
    <property type="entry name" value="Helicase/UvrB_N"/>
</dbReference>
<dbReference type="InterPro" id="IPR014001">
    <property type="entry name" value="Helicase_ATP-bd"/>
</dbReference>
<dbReference type="InterPro" id="IPR001650">
    <property type="entry name" value="Helicase_C-like"/>
</dbReference>
<dbReference type="InterPro" id="IPR027417">
    <property type="entry name" value="P-loop_NTPase"/>
</dbReference>
<dbReference type="InterPro" id="IPR001943">
    <property type="entry name" value="UVR_dom"/>
</dbReference>
<dbReference type="InterPro" id="IPR036876">
    <property type="entry name" value="UVR_dom_sf"/>
</dbReference>
<dbReference type="InterPro" id="IPR004807">
    <property type="entry name" value="UvrB"/>
</dbReference>
<dbReference type="InterPro" id="IPR041471">
    <property type="entry name" value="UvrB_inter"/>
</dbReference>
<dbReference type="InterPro" id="IPR024759">
    <property type="entry name" value="UvrB_YAD/RRR_dom"/>
</dbReference>
<dbReference type="NCBIfam" id="NF003673">
    <property type="entry name" value="PRK05298.1"/>
    <property type="match status" value="1"/>
</dbReference>
<dbReference type="NCBIfam" id="TIGR00631">
    <property type="entry name" value="uvrb"/>
    <property type="match status" value="1"/>
</dbReference>
<dbReference type="PANTHER" id="PTHR24029">
    <property type="entry name" value="UVRABC SYSTEM PROTEIN B"/>
    <property type="match status" value="1"/>
</dbReference>
<dbReference type="PANTHER" id="PTHR24029:SF0">
    <property type="entry name" value="UVRABC SYSTEM PROTEIN B"/>
    <property type="match status" value="1"/>
</dbReference>
<dbReference type="Pfam" id="PF00271">
    <property type="entry name" value="Helicase_C"/>
    <property type="match status" value="1"/>
</dbReference>
<dbReference type="Pfam" id="PF04851">
    <property type="entry name" value="ResIII"/>
    <property type="match status" value="1"/>
</dbReference>
<dbReference type="Pfam" id="PF02151">
    <property type="entry name" value="UVR"/>
    <property type="match status" value="1"/>
</dbReference>
<dbReference type="Pfam" id="PF12344">
    <property type="entry name" value="UvrB"/>
    <property type="match status" value="1"/>
</dbReference>
<dbReference type="Pfam" id="PF17757">
    <property type="entry name" value="UvrB_inter"/>
    <property type="match status" value="1"/>
</dbReference>
<dbReference type="SMART" id="SM00487">
    <property type="entry name" value="DEXDc"/>
    <property type="match status" value="1"/>
</dbReference>
<dbReference type="SMART" id="SM00490">
    <property type="entry name" value="HELICc"/>
    <property type="match status" value="1"/>
</dbReference>
<dbReference type="SUPFAM" id="SSF46600">
    <property type="entry name" value="C-terminal UvrC-binding domain of UvrB"/>
    <property type="match status" value="1"/>
</dbReference>
<dbReference type="SUPFAM" id="SSF52540">
    <property type="entry name" value="P-loop containing nucleoside triphosphate hydrolases"/>
    <property type="match status" value="2"/>
</dbReference>
<dbReference type="PROSITE" id="PS51192">
    <property type="entry name" value="HELICASE_ATP_BIND_1"/>
    <property type="match status" value="1"/>
</dbReference>
<dbReference type="PROSITE" id="PS51194">
    <property type="entry name" value="HELICASE_CTER"/>
    <property type="match status" value="1"/>
</dbReference>
<dbReference type="PROSITE" id="PS50151">
    <property type="entry name" value="UVR"/>
    <property type="match status" value="1"/>
</dbReference>
<comment type="function">
    <text evidence="1">The UvrABC repair system catalyzes the recognition and processing of DNA lesions. A damage recognition complex composed of 2 UvrA and 2 UvrB subunits scans DNA for abnormalities. Upon binding of the UvrA(2)B(2) complex to a putative damaged site, the DNA wraps around one UvrB monomer. DNA wrap is dependent on ATP binding by UvrB and probably causes local melting of the DNA helix, facilitating insertion of UvrB beta-hairpin between the DNA strands. Then UvrB probes one DNA strand for the presence of a lesion. If a lesion is found the UvrA subunits dissociate and the UvrB-DNA preincision complex is formed. This complex is subsequently bound by UvrC and the second UvrB is released. If no lesion is found, the DNA wraps around the other UvrB subunit that will check the other stand for damage.</text>
</comment>
<comment type="subunit">
    <text evidence="1">Forms a heterotetramer with UvrA during the search for lesions. Interacts with UvrC in an incision complex.</text>
</comment>
<comment type="subcellular location">
    <subcellularLocation>
        <location evidence="1">Cytoplasm</location>
    </subcellularLocation>
</comment>
<comment type="domain">
    <text evidence="1">The beta-hairpin motif is involved in DNA binding.</text>
</comment>
<comment type="similarity">
    <text evidence="1">Belongs to the UvrB family.</text>
</comment>
<organism>
    <name type="scientific">Rickettsia conorii (strain ATCC VR-613 / Malish 7)</name>
    <dbReference type="NCBI Taxonomy" id="272944"/>
    <lineage>
        <taxon>Bacteria</taxon>
        <taxon>Pseudomonadati</taxon>
        <taxon>Pseudomonadota</taxon>
        <taxon>Alphaproteobacteria</taxon>
        <taxon>Rickettsiales</taxon>
        <taxon>Rickettsiaceae</taxon>
        <taxon>Rickettsieae</taxon>
        <taxon>Rickettsia</taxon>
        <taxon>spotted fever group</taxon>
    </lineage>
</organism>
<feature type="chain" id="PRO_0000138420" description="UvrABC system protein B">
    <location>
        <begin position="1"/>
        <end position="661"/>
    </location>
</feature>
<feature type="domain" description="Helicase ATP-binding" evidence="1">
    <location>
        <begin position="25"/>
        <end position="414"/>
    </location>
</feature>
<feature type="domain" description="Helicase C-terminal" evidence="1">
    <location>
        <begin position="430"/>
        <end position="592"/>
    </location>
</feature>
<feature type="domain" description="UVR" evidence="1">
    <location>
        <begin position="621"/>
        <end position="656"/>
    </location>
</feature>
<feature type="short sequence motif" description="Beta-hairpin">
    <location>
        <begin position="91"/>
        <end position="114"/>
    </location>
</feature>
<feature type="binding site" evidence="1">
    <location>
        <begin position="38"/>
        <end position="45"/>
    </location>
    <ligand>
        <name>ATP</name>
        <dbReference type="ChEBI" id="CHEBI:30616"/>
    </ligand>
</feature>
<keyword id="KW-0067">ATP-binding</keyword>
<keyword id="KW-0963">Cytoplasm</keyword>
<keyword id="KW-0227">DNA damage</keyword>
<keyword id="KW-0228">DNA excision</keyword>
<keyword id="KW-0234">DNA repair</keyword>
<keyword id="KW-0267">Excision nuclease</keyword>
<keyword id="KW-0547">Nucleotide-binding</keyword>
<keyword id="KW-0742">SOS response</keyword>
<gene>
    <name evidence="1" type="primary">uvrB</name>
    <name type="ordered locus">RC0266</name>
</gene>
<accession>Q92J03</accession>
<reference key="1">
    <citation type="journal article" date="2001" name="Science">
        <title>Mechanisms of evolution in Rickettsia conorii and R. prowazekii.</title>
        <authorList>
            <person name="Ogata H."/>
            <person name="Audic S."/>
            <person name="Renesto-Audiffren P."/>
            <person name="Fournier P.-E."/>
            <person name="Barbe V."/>
            <person name="Samson D."/>
            <person name="Roux V."/>
            <person name="Cossart P."/>
            <person name="Weissenbach J."/>
            <person name="Claverie J.-M."/>
            <person name="Raoult D."/>
        </authorList>
    </citation>
    <scope>NUCLEOTIDE SEQUENCE [LARGE SCALE GENOMIC DNA]</scope>
    <source>
        <strain>ATCC VR-613 / Malish 7</strain>
    </source>
</reference>